<name>SYMC_MOUSE</name>
<proteinExistence type="evidence at protein level"/>
<comment type="function">
    <text evidence="2">Catalyzes the specific attachment of an amino acid to its cognate tRNA in a 2 step reaction: the amino acid (AA) is first activated by ATP to form AA-AMP and then transferred to the acceptor end of the tRNA. Plays a role in the synthesis of ribosomal RNA in the nucleolus.</text>
</comment>
<comment type="catalytic activity">
    <reaction evidence="2">
        <text>tRNA(Met) + L-methionine + ATP = L-methionyl-tRNA(Met) + AMP + diphosphate</text>
        <dbReference type="Rhea" id="RHEA:13481"/>
        <dbReference type="Rhea" id="RHEA-COMP:9667"/>
        <dbReference type="Rhea" id="RHEA-COMP:9698"/>
        <dbReference type="ChEBI" id="CHEBI:30616"/>
        <dbReference type="ChEBI" id="CHEBI:33019"/>
        <dbReference type="ChEBI" id="CHEBI:57844"/>
        <dbReference type="ChEBI" id="CHEBI:78442"/>
        <dbReference type="ChEBI" id="CHEBI:78530"/>
        <dbReference type="ChEBI" id="CHEBI:456215"/>
        <dbReference type="EC" id="6.1.1.10"/>
    </reaction>
</comment>
<comment type="subunit">
    <text evidence="3">Monomer. Part of a multisubunit complex that groups tRNA ligases for Arg (RARS1), Asp (DARS1), Gln (QARS1), Ile (IARS1), Leu (LARS1), Lys (KARS1), Met (MARS1) the bifunctional ligase for Glu and Pro (EPRS1) and the auxiliary subunits AIMP1/p43, AIMP2/p38 and EEF1E1/p18. Forms a linear complex that contains MARS1, EEF1E1, EPRS1 and AIMP2 that is at the core of the multisubunit complex.</text>
</comment>
<comment type="subcellular location">
    <subcellularLocation>
        <location evidence="2">Cytoplasm</location>
        <location evidence="2">Cytosol</location>
    </subcellularLocation>
    <subcellularLocation>
        <location evidence="2">Nucleus</location>
        <location evidence="2">Nucleolus</location>
    </subcellularLocation>
    <text evidence="2">Localizes to the nucleolus in proliferative cells but disappears in quiescent cells.</text>
</comment>
<comment type="similarity">
    <text evidence="4">Belongs to the class-I aminoacyl-tRNA synthetase family.</text>
</comment>
<protein>
    <recommendedName>
        <fullName>Methionine--tRNA ligase, cytoplasmic</fullName>
        <ecNumber evidence="2">6.1.1.10</ecNumber>
    </recommendedName>
    <alternativeName>
        <fullName>Methionyl-tRNA synthetase</fullName>
        <shortName>MetRS</shortName>
    </alternativeName>
</protein>
<reference key="1">
    <citation type="journal article" date="2004" name="Genome Res.">
        <title>The status, quality, and expansion of the NIH full-length cDNA project: the Mammalian Gene Collection (MGC).</title>
        <authorList>
            <consortium name="The MGC Project Team"/>
        </authorList>
    </citation>
    <scope>NUCLEOTIDE SEQUENCE [LARGE SCALE MRNA]</scope>
    <source>
        <strain>C57BL/6J</strain>
    </source>
</reference>
<reference key="2">
    <citation type="journal article" date="2002" name="Proc. Natl. Acad. Sci. U.S.A.">
        <title>p38 is essential for the assembly and stability of macromolecular tRNA synthetase complex: implications for its physiological significance.</title>
        <authorList>
            <person name="Kim J.Y."/>
            <person name="Kang Y.-S."/>
            <person name="Lee J.-W."/>
            <person name="Kim H.J."/>
            <person name="Ahn Y.H."/>
            <person name="Park H."/>
            <person name="Ko Y.-G."/>
            <person name="Kim S."/>
        </authorList>
    </citation>
    <scope>SUBUNIT</scope>
</reference>
<reference key="3">
    <citation type="journal article" date="2010" name="Cell">
        <title>A tissue-specific atlas of mouse protein phosphorylation and expression.</title>
        <authorList>
            <person name="Huttlin E.L."/>
            <person name="Jedrychowski M.P."/>
            <person name="Elias J.E."/>
            <person name="Goswami T."/>
            <person name="Rad R."/>
            <person name="Beausoleil S.A."/>
            <person name="Villen J."/>
            <person name="Haas W."/>
            <person name="Sowa M.E."/>
            <person name="Gygi S.P."/>
        </authorList>
    </citation>
    <scope>PHOSPHORYLATION [LARGE SCALE ANALYSIS] AT SER-827 AND THR-837</scope>
    <scope>IDENTIFICATION BY MASS SPECTROMETRY [LARGE SCALE ANALYSIS]</scope>
    <source>
        <tissue>Brain</tissue>
        <tissue>Brown adipose tissue</tissue>
        <tissue>Heart</tissue>
        <tissue>Kidney</tissue>
        <tissue>Liver</tissue>
        <tissue>Lung</tissue>
        <tissue>Pancreas</tissue>
        <tissue>Spleen</tissue>
        <tissue>Testis</tissue>
    </source>
</reference>
<evidence type="ECO:0000250" key="1"/>
<evidence type="ECO:0000250" key="2">
    <source>
        <dbReference type="UniProtKB" id="P56192"/>
    </source>
</evidence>
<evidence type="ECO:0000269" key="3">
    <source>
    </source>
</evidence>
<evidence type="ECO:0000305" key="4"/>
<evidence type="ECO:0007744" key="5">
    <source>
    </source>
</evidence>
<accession>Q68FL6</accession>
<organism>
    <name type="scientific">Mus musculus</name>
    <name type="common">Mouse</name>
    <dbReference type="NCBI Taxonomy" id="10090"/>
    <lineage>
        <taxon>Eukaryota</taxon>
        <taxon>Metazoa</taxon>
        <taxon>Chordata</taxon>
        <taxon>Craniata</taxon>
        <taxon>Vertebrata</taxon>
        <taxon>Euteleostomi</taxon>
        <taxon>Mammalia</taxon>
        <taxon>Eutheria</taxon>
        <taxon>Euarchontoglires</taxon>
        <taxon>Glires</taxon>
        <taxon>Rodentia</taxon>
        <taxon>Myomorpha</taxon>
        <taxon>Muroidea</taxon>
        <taxon>Muridae</taxon>
        <taxon>Murinae</taxon>
        <taxon>Mus</taxon>
        <taxon>Mus</taxon>
    </lineage>
</organism>
<gene>
    <name type="primary">Mars1</name>
    <name type="synonym">Mars</name>
</gene>
<feature type="chain" id="PRO_0000139263" description="Methionine--tRNA ligase, cytoplasmic">
    <location>
        <begin position="1"/>
        <end position="902"/>
    </location>
</feature>
<feature type="domain" description="GST C-terminal">
    <location>
        <begin position="74"/>
        <end position="212"/>
    </location>
</feature>
<feature type="domain" description="WHEP-TRS">
    <location>
        <begin position="843"/>
        <end position="899"/>
    </location>
</feature>
<feature type="short sequence motif" description="'HIGH' region">
    <location>
        <begin position="275"/>
        <end position="285"/>
    </location>
</feature>
<feature type="short sequence motif" description="'KMSKS' region">
    <location>
        <begin position="595"/>
        <end position="599"/>
    </location>
</feature>
<feature type="binding site" evidence="1">
    <location>
        <position position="598"/>
    </location>
    <ligand>
        <name>ATP</name>
        <dbReference type="ChEBI" id="CHEBI:30616"/>
    </ligand>
</feature>
<feature type="modified residue" description="Phosphoserine" evidence="5">
    <location>
        <position position="827"/>
    </location>
</feature>
<feature type="modified residue" description="Phosphothreonine" evidence="5">
    <location>
        <position position="837"/>
    </location>
</feature>
<dbReference type="EC" id="6.1.1.10" evidence="2"/>
<dbReference type="EMBL" id="BC079643">
    <property type="protein sequence ID" value="AAH79643.1"/>
    <property type="molecule type" value="mRNA"/>
</dbReference>
<dbReference type="CCDS" id="CCDS24237.1"/>
<dbReference type="RefSeq" id="NP_001003913.1">
    <property type="nucleotide sequence ID" value="NM_001003913.2"/>
</dbReference>
<dbReference type="RefSeq" id="NP_001165053.1">
    <property type="nucleotide sequence ID" value="NM_001171582.1"/>
</dbReference>
<dbReference type="SMR" id="Q68FL6"/>
<dbReference type="BioGRID" id="229747">
    <property type="interactions" value="13"/>
</dbReference>
<dbReference type="FunCoup" id="Q68FL6">
    <property type="interactions" value="3303"/>
</dbReference>
<dbReference type="IntAct" id="Q68FL6">
    <property type="interactions" value="2"/>
</dbReference>
<dbReference type="MINT" id="Q68FL6"/>
<dbReference type="STRING" id="10090.ENSMUSP00000130666"/>
<dbReference type="GlyGen" id="Q68FL6">
    <property type="glycosylation" value="1 site, 1 N-linked glycan (1 site)"/>
</dbReference>
<dbReference type="iPTMnet" id="Q68FL6"/>
<dbReference type="PhosphoSitePlus" id="Q68FL6"/>
<dbReference type="SwissPalm" id="Q68FL6"/>
<dbReference type="jPOST" id="Q68FL6"/>
<dbReference type="PaxDb" id="10090-ENSMUSP00000037446"/>
<dbReference type="PeptideAtlas" id="Q68FL6"/>
<dbReference type="ProteomicsDB" id="254506"/>
<dbReference type="Pumba" id="Q68FL6"/>
<dbReference type="Antibodypedia" id="1110">
    <property type="antibodies" value="179 antibodies from 30 providers"/>
</dbReference>
<dbReference type="DNASU" id="216443"/>
<dbReference type="Ensembl" id="ENSMUST00000037290.12">
    <property type="protein sequence ID" value="ENSMUSP00000037446.6"/>
    <property type="gene ID" value="ENSMUSG00000040354.15"/>
</dbReference>
<dbReference type="GeneID" id="216443"/>
<dbReference type="KEGG" id="mmu:216443"/>
<dbReference type="UCSC" id="uc007hiz.2">
    <property type="organism name" value="mouse"/>
</dbReference>
<dbReference type="AGR" id="MGI:1345633"/>
<dbReference type="CTD" id="4141"/>
<dbReference type="MGI" id="MGI:1345633">
    <property type="gene designation" value="Mars1"/>
</dbReference>
<dbReference type="VEuPathDB" id="HostDB:ENSMUSG00000040354"/>
<dbReference type="eggNOG" id="KOG0867">
    <property type="taxonomic scope" value="Eukaryota"/>
</dbReference>
<dbReference type="eggNOG" id="KOG1247">
    <property type="taxonomic scope" value="Eukaryota"/>
</dbReference>
<dbReference type="GeneTree" id="ENSGT00550000075017"/>
<dbReference type="HOGENOM" id="CLU_009710_3_2_1"/>
<dbReference type="InParanoid" id="Q68FL6"/>
<dbReference type="OMA" id="HLNTTEY"/>
<dbReference type="OrthoDB" id="5844513at2759"/>
<dbReference type="PhylomeDB" id="Q68FL6"/>
<dbReference type="TreeFam" id="TF300526"/>
<dbReference type="Reactome" id="R-MMU-9856649">
    <property type="pathway name" value="Transcriptional and post-translational regulation of MITF-M expression and activity"/>
</dbReference>
<dbReference type="BioGRID-ORCS" id="216443">
    <property type="hits" value="26 hits in 78 CRISPR screens"/>
</dbReference>
<dbReference type="ChiTaRS" id="Mars">
    <property type="organism name" value="mouse"/>
</dbReference>
<dbReference type="PRO" id="PR:Q68FL6"/>
<dbReference type="Proteomes" id="UP000000589">
    <property type="component" value="Chromosome 10"/>
</dbReference>
<dbReference type="RNAct" id="Q68FL6">
    <property type="molecule type" value="protein"/>
</dbReference>
<dbReference type="Bgee" id="ENSMUSG00000040354">
    <property type="expression patterns" value="Expressed in floor plate of midbrain and 262 other cell types or tissues"/>
</dbReference>
<dbReference type="ExpressionAtlas" id="Q68FL6">
    <property type="expression patterns" value="baseline and differential"/>
</dbReference>
<dbReference type="GO" id="GO:0017101">
    <property type="term" value="C:aminoacyl-tRNA synthetase multienzyme complex"/>
    <property type="evidence" value="ECO:0000314"/>
    <property type="project" value="CAFA"/>
</dbReference>
<dbReference type="GO" id="GO:0005737">
    <property type="term" value="C:cytoplasm"/>
    <property type="evidence" value="ECO:0000266"/>
    <property type="project" value="MGI"/>
</dbReference>
<dbReference type="GO" id="GO:0005829">
    <property type="term" value="C:cytosol"/>
    <property type="evidence" value="ECO:0007669"/>
    <property type="project" value="UniProtKB-SubCell"/>
</dbReference>
<dbReference type="GO" id="GO:0005739">
    <property type="term" value="C:mitochondrion"/>
    <property type="evidence" value="ECO:0007005"/>
    <property type="project" value="MGI"/>
</dbReference>
<dbReference type="GO" id="GO:0005730">
    <property type="term" value="C:nucleolus"/>
    <property type="evidence" value="ECO:0000266"/>
    <property type="project" value="MGI"/>
</dbReference>
<dbReference type="GO" id="GO:0005524">
    <property type="term" value="F:ATP binding"/>
    <property type="evidence" value="ECO:0007669"/>
    <property type="project" value="UniProtKB-KW"/>
</dbReference>
<dbReference type="GO" id="GO:0004825">
    <property type="term" value="F:methionine-tRNA ligase activity"/>
    <property type="evidence" value="ECO:0000315"/>
    <property type="project" value="CAFA"/>
</dbReference>
<dbReference type="GO" id="GO:0000049">
    <property type="term" value="F:tRNA binding"/>
    <property type="evidence" value="ECO:0007669"/>
    <property type="project" value="UniProtKB-KW"/>
</dbReference>
<dbReference type="GO" id="GO:0006431">
    <property type="term" value="P:methionyl-tRNA aminoacylation"/>
    <property type="evidence" value="ECO:0000314"/>
    <property type="project" value="CAFA"/>
</dbReference>
<dbReference type="GO" id="GO:0009303">
    <property type="term" value="P:rRNA transcription"/>
    <property type="evidence" value="ECO:0000266"/>
    <property type="project" value="MGI"/>
</dbReference>
<dbReference type="CDD" id="cd07957">
    <property type="entry name" value="Anticodon_Ia_Met"/>
    <property type="match status" value="1"/>
</dbReference>
<dbReference type="CDD" id="cd10307">
    <property type="entry name" value="GST_C_MetRS_N"/>
    <property type="match status" value="1"/>
</dbReference>
<dbReference type="CDD" id="cd00814">
    <property type="entry name" value="MetRS_core"/>
    <property type="match status" value="1"/>
</dbReference>
<dbReference type="CDD" id="cd00939">
    <property type="entry name" value="MetRS_RNA"/>
    <property type="match status" value="1"/>
</dbReference>
<dbReference type="FunFam" id="2.20.28.20:FF:000001">
    <property type="entry name" value="Methionine--tRNA ligase"/>
    <property type="match status" value="1"/>
</dbReference>
<dbReference type="FunFam" id="1.10.287.10:FF:000009">
    <property type="entry name" value="Methionine--tRNA ligase, cytoplasmic"/>
    <property type="match status" value="1"/>
</dbReference>
<dbReference type="FunFam" id="1.20.1050.10:FF:000026">
    <property type="entry name" value="Methionine--tRNA ligase, cytoplasmic"/>
    <property type="match status" value="1"/>
</dbReference>
<dbReference type="FunFam" id="1.10.730.10:FF:000010">
    <property type="entry name" value="methionine--tRNA ligase, cytoplasmic"/>
    <property type="match status" value="1"/>
</dbReference>
<dbReference type="FunFam" id="3.40.30.10:FF:000136">
    <property type="entry name" value="methionine--tRNA ligase, cytoplasmic"/>
    <property type="match status" value="1"/>
</dbReference>
<dbReference type="Gene3D" id="1.20.1050.10">
    <property type="match status" value="1"/>
</dbReference>
<dbReference type="Gene3D" id="3.40.30.10">
    <property type="entry name" value="Glutaredoxin"/>
    <property type="match status" value="1"/>
</dbReference>
<dbReference type="Gene3D" id="3.40.50.620">
    <property type="entry name" value="HUPs"/>
    <property type="match status" value="1"/>
</dbReference>
<dbReference type="Gene3D" id="1.10.730.10">
    <property type="entry name" value="Isoleucyl-tRNA Synthetase, Domain 1"/>
    <property type="match status" value="1"/>
</dbReference>
<dbReference type="Gene3D" id="2.20.28.20">
    <property type="entry name" value="Methionyl-tRNA synthetase, Zn-domain"/>
    <property type="match status" value="1"/>
</dbReference>
<dbReference type="Gene3D" id="1.10.287.10">
    <property type="entry name" value="S15/NS1, RNA-binding"/>
    <property type="match status" value="1"/>
</dbReference>
<dbReference type="HAMAP" id="MF_00098">
    <property type="entry name" value="Met_tRNA_synth_type1"/>
    <property type="match status" value="1"/>
</dbReference>
<dbReference type="InterPro" id="IPR001412">
    <property type="entry name" value="aa-tRNA-synth_I_CS"/>
</dbReference>
<dbReference type="InterPro" id="IPR041872">
    <property type="entry name" value="Anticodon_Met"/>
</dbReference>
<dbReference type="InterPro" id="IPR010987">
    <property type="entry name" value="Glutathione-S-Trfase_C-like"/>
</dbReference>
<dbReference type="InterPro" id="IPR036282">
    <property type="entry name" value="Glutathione-S-Trfase_C_sf"/>
</dbReference>
<dbReference type="InterPro" id="IPR004046">
    <property type="entry name" value="GST_C"/>
</dbReference>
<dbReference type="InterPro" id="IPR041598">
    <property type="entry name" value="MARS_N"/>
</dbReference>
<dbReference type="InterPro" id="IPR023458">
    <property type="entry name" value="Met-tRNA_ligase_1"/>
</dbReference>
<dbReference type="InterPro" id="IPR014758">
    <property type="entry name" value="Met-tRNA_synth"/>
</dbReference>
<dbReference type="InterPro" id="IPR015413">
    <property type="entry name" value="Methionyl/Leucyl_tRNA_Synth"/>
</dbReference>
<dbReference type="InterPro" id="IPR033911">
    <property type="entry name" value="MetRS_core"/>
</dbReference>
<dbReference type="InterPro" id="IPR029038">
    <property type="entry name" value="MetRS_Zn"/>
</dbReference>
<dbReference type="InterPro" id="IPR014729">
    <property type="entry name" value="Rossmann-like_a/b/a_fold"/>
</dbReference>
<dbReference type="InterPro" id="IPR009080">
    <property type="entry name" value="tRNAsynth_Ia_anticodon-bd"/>
</dbReference>
<dbReference type="InterPro" id="IPR009068">
    <property type="entry name" value="uS15_NS1_RNA-bd_sf"/>
</dbReference>
<dbReference type="InterPro" id="IPR000738">
    <property type="entry name" value="WHEP-TRS_dom"/>
</dbReference>
<dbReference type="NCBIfam" id="TIGR00398">
    <property type="entry name" value="metG"/>
    <property type="match status" value="1"/>
</dbReference>
<dbReference type="NCBIfam" id="NF001100">
    <property type="entry name" value="PRK00133.1"/>
    <property type="match status" value="1"/>
</dbReference>
<dbReference type="PANTHER" id="PTHR45765">
    <property type="entry name" value="METHIONINE--TRNA LIGASE"/>
    <property type="match status" value="1"/>
</dbReference>
<dbReference type="PANTHER" id="PTHR45765:SF1">
    <property type="entry name" value="METHIONINE--TRNA LIGASE, CYTOPLASMIC"/>
    <property type="match status" value="1"/>
</dbReference>
<dbReference type="Pfam" id="PF19303">
    <property type="entry name" value="Anticodon_3"/>
    <property type="match status" value="1"/>
</dbReference>
<dbReference type="Pfam" id="PF00043">
    <property type="entry name" value="GST_C"/>
    <property type="match status" value="1"/>
</dbReference>
<dbReference type="Pfam" id="PF18485">
    <property type="entry name" value="GST_N_5"/>
    <property type="match status" value="1"/>
</dbReference>
<dbReference type="Pfam" id="PF09334">
    <property type="entry name" value="tRNA-synt_1g"/>
    <property type="match status" value="1"/>
</dbReference>
<dbReference type="Pfam" id="PF00458">
    <property type="entry name" value="WHEP-TRS"/>
    <property type="match status" value="1"/>
</dbReference>
<dbReference type="PRINTS" id="PR01041">
    <property type="entry name" value="TRNASYNTHMET"/>
</dbReference>
<dbReference type="SMART" id="SM00991">
    <property type="entry name" value="WHEP-TRS"/>
    <property type="match status" value="1"/>
</dbReference>
<dbReference type="SUPFAM" id="SSF47323">
    <property type="entry name" value="Anticodon-binding domain of a subclass of class I aminoacyl-tRNA synthetases"/>
    <property type="match status" value="1"/>
</dbReference>
<dbReference type="SUPFAM" id="SSF47616">
    <property type="entry name" value="GST C-terminal domain-like"/>
    <property type="match status" value="1"/>
</dbReference>
<dbReference type="SUPFAM" id="SSF57770">
    <property type="entry name" value="Methionyl-tRNA synthetase (MetRS), Zn-domain"/>
    <property type="match status" value="1"/>
</dbReference>
<dbReference type="SUPFAM" id="SSF52374">
    <property type="entry name" value="Nucleotidylyl transferase"/>
    <property type="match status" value="1"/>
</dbReference>
<dbReference type="SUPFAM" id="SSF47060">
    <property type="entry name" value="S15/NS1 RNA-binding domain"/>
    <property type="match status" value="1"/>
</dbReference>
<dbReference type="PROSITE" id="PS00178">
    <property type="entry name" value="AA_TRNA_LIGASE_I"/>
    <property type="match status" value="1"/>
</dbReference>
<dbReference type="PROSITE" id="PS50405">
    <property type="entry name" value="GST_CTER"/>
    <property type="match status" value="1"/>
</dbReference>
<dbReference type="PROSITE" id="PS00762">
    <property type="entry name" value="WHEP_TRS_1"/>
    <property type="match status" value="1"/>
</dbReference>
<dbReference type="PROSITE" id="PS51185">
    <property type="entry name" value="WHEP_TRS_2"/>
    <property type="match status" value="1"/>
</dbReference>
<keyword id="KW-0030">Aminoacyl-tRNA synthetase</keyword>
<keyword id="KW-0067">ATP-binding</keyword>
<keyword id="KW-0963">Cytoplasm</keyword>
<keyword id="KW-0436">Ligase</keyword>
<keyword id="KW-0547">Nucleotide-binding</keyword>
<keyword id="KW-0539">Nucleus</keyword>
<keyword id="KW-0597">Phosphoprotein</keyword>
<keyword id="KW-0648">Protein biosynthesis</keyword>
<keyword id="KW-1185">Reference proteome</keyword>
<keyword id="KW-0694">RNA-binding</keyword>
<keyword id="KW-0820">tRNA-binding</keyword>
<sequence>MRLFVSEGSPGSLPVLAAAARARGRAELLISTVGPEECVVPFLTRPKVPVLQLDSGNYLFSASAICRYFFLLCGWEQDDLTNQWLEWEATELQPVLSAALHCLVVQGKKGEDILGPLRRVLTHIDHSLSRQNCPFLAGDTESLADIVLWGALYPLLQDPAYLPEELGALQSWFQTLSTQEPCQRAAETVLKQQGVLALRLYLQKQPQPQPPPPEGRTVSNELEEEELATLSEEDIVTAVAAWEKGLESLPPLKLQQHPVLPVPGERNVLITSALPYVNNVPHLGNIIGCVLSADVFARYCRLRQWNTLYLCGTDEYGTATETKAMEEGLTPREICDKYHAIHADIYRWFGISFDTFGRTTTPQQTKITQDIFQRLLTRGFVLRDTVEQLRCERCARFLADRFVEGVCPFCGYEEARGDQCDRCGKLINAIELKKPQCKICRSCPVVRSSQHLFLDLPKLEKRLEDWLGKTVPGSDWTPNARFIIRSWLRDGLKPRCITRDLKWGTPVPLEGFEDKVFYVWFDATIGYVSITANYTDQWEKWWKNPEQVDLYQFMAKDNVPFHGLVFPCSVLGAEDNYTLVKHIIATEYLNYEDGKFSKSRGIGVFGDMAKDTGIPADIWRFYLLYIRPEGQDSAFSWTDLLIKNNSELLNNLGNFINRAGMFVSKFFGGCVPEMALTPDDRRLVAHVSWELQHYHQLLEKVRIRDALRSILTISRHGNQYIQVNEPWKRIKGGEMDRQRAGTVTGMAVNMAALLSVMLQPYMPTVSSTIQTQLQLPPAACRILATSFICTLPAGHRIGTVSPLFQKLENDQIENLRQRFGGGQAKGSPKPAAVEAVTAAGSQHIQTLTDEVTKQGNVVRELKAQKADKNQVAAEVAKLLDLKKQLALAEGKPIETPKGKKKK</sequence>